<accession>Q9GZV4</accession>
<accession>B2R4V5</accession>
<comment type="function">
    <text evidence="1 2 5">Translation factor that promotes translation elongation and termination, particularly upon ribosome stalling at specific amino acid sequence contexts (PubMed:14622290). Binds between the exit (E) and peptidyl (P) site of the ribosome and promotes rescue of stalled ribosome: specifically required for efficient translation of polyproline-containing peptides as well as other motifs that stall the ribosome. Acts as a ribosome quality control (RQC) cofactor by joining the RQC complex to facilitate peptidyl transfer during CAT tailing step (By similarity). Also involved in actin dynamics and cell cycle progression, mRNA decay and probably in a pathway involved in stress response and maintenance of cell wall integrity (By similarity).</text>
</comment>
<comment type="subunit">
    <text evidence="2 3">Binds to 80S ribosomes (By similarity). Actively translating ribosomes show mutually exclusive binding of eIF5a (EIF5A or EIF5A2) and EEF2/eEF2 (By similarity). Interacts with DAPL1; interaction takes place at the polypeptide exit tunnel of hibernating ribosomes and prevents translation (By similarity).</text>
</comment>
<comment type="interaction">
    <interactant intactId="EBI-748028">
        <id>Q9GZV4</id>
    </interactant>
    <interactant intactId="EBI-396137">
        <id>Q9UJX2</id>
        <label>CDC23</label>
    </interactant>
    <organismsDiffer>false</organismsDiffer>
    <experiments>3</experiments>
</comment>
<comment type="interaction">
    <interactant intactId="EBI-748028">
        <id>Q9GZV4</id>
    </interactant>
    <interactant intactId="EBI-741925">
        <id>P49366</id>
        <label>DHPS</label>
    </interactant>
    <organismsDiffer>false</organismsDiffer>
    <experiments>9</experiments>
</comment>
<comment type="interaction">
    <interactant intactId="EBI-748028">
        <id>Q9GZV4</id>
    </interactant>
    <interactant intactId="EBI-740897">
        <id>Q9GZT8</id>
        <label>NIF3L1</label>
    </interactant>
    <organismsDiffer>false</organismsDiffer>
    <experiments>3</experiments>
</comment>
<comment type="interaction">
    <interactant intactId="EBI-748028">
        <id>Q9GZV4</id>
    </interactant>
    <interactant intactId="EBI-307352">
        <id>Q04864</id>
        <label>REL</label>
    </interactant>
    <organismsDiffer>false</organismsDiffer>
    <experiments>3</experiments>
</comment>
<comment type="interaction">
    <interactant intactId="EBI-748028">
        <id>Q9GZV4</id>
    </interactant>
    <interactant intactId="EBI-10829018">
        <id>Q04864-2</id>
        <label>REL</label>
    </interactant>
    <organismsDiffer>false</organismsDiffer>
    <experiments>3</experiments>
</comment>
<comment type="interaction">
    <interactant intactId="EBI-748028">
        <id>Q9GZV4</id>
    </interactant>
    <interactant intactId="EBI-727004">
        <id>O00560</id>
        <label>SDCBP</label>
    </interactant>
    <organismsDiffer>false</organismsDiffer>
    <experiments>6</experiments>
</comment>
<comment type="subcellular location">
    <subcellularLocation>
        <location evidence="2">Cytoplasm</location>
    </subcellularLocation>
    <subcellularLocation>
        <location evidence="2">Nucleus</location>
    </subcellularLocation>
    <subcellularLocation>
        <location evidence="2">Endoplasmic reticulum membrane</location>
        <topology evidence="2">Peripheral membrane protein</topology>
        <orientation evidence="2">Cytoplasmic side</orientation>
    </subcellularLocation>
    <text evidence="2">Hypusine modification promotes the nuclear export and cytoplasmic localization and there was a dynamic shift in the localization from predominantly cytoplasmic to primarily nuclear under apoptotic inducing conditions.</text>
</comment>
<comment type="tissue specificity">
    <text evidence="4 7">Expressed in ovarian and colorectal cancer cell lines (at protein level). Highly expressed in testis. Overexpressed in some cancer cells.</text>
</comment>
<comment type="PTM">
    <text evidence="5">Lys-50 undergoes hypusination, a unique post-translational modification that consists in the addition of a butylamino group from spermidine to lysine side chain and leads to the formation of a hypusine residue. eIF-5As are the only known proteins to undergo this modification, which is essential for their function.</text>
</comment>
<comment type="similarity">
    <text evidence="8">Belongs to the eIF-5A family.</text>
</comment>
<protein>
    <recommendedName>
        <fullName>Eukaryotic translation initiation factor 5A-2</fullName>
        <shortName>eIF-5A-2</shortName>
        <shortName>eIF-5A2</shortName>
    </recommendedName>
    <alternativeName>
        <fullName>Eukaryotic initiation factor 5A isoform 2</fullName>
    </alternativeName>
</protein>
<name>IF5A2_HUMAN</name>
<sequence length="153" mass="16793">MADEIDFTTGDAGASSTYPMQCSALRKNGFVVLKGRPCKIVEMSTSKTGKHGHAKVHLVGIDIFTGKKYEDICPSTHNMDVPNIKRNDYQLICIQDGYLSLLTETGEVREDLKLPEGELGKEIEGKYNAGEDVQVSVMCAMSEEYAVAIKPCK</sequence>
<feature type="initiator methionine" description="Removed" evidence="9">
    <location>
        <position position="1"/>
    </location>
</feature>
<feature type="chain" id="PRO_0000229764" description="Eukaryotic translation initiation factor 5A-2">
    <location>
        <begin position="2"/>
        <end position="153"/>
    </location>
</feature>
<feature type="modified residue" description="N-acetylalanine" evidence="9">
    <location>
        <position position="2"/>
    </location>
</feature>
<feature type="modified residue" description="Hypusine" evidence="5">
    <location>
        <position position="50"/>
    </location>
</feature>
<feature type="sequence variant" id="VAR_027943" description="In dbSNP:rs776545602." evidence="6">
    <original>E</original>
    <variation>D</variation>
    <location>
        <position position="42"/>
    </location>
</feature>
<keyword id="KW-0007">Acetylation</keyword>
<keyword id="KW-0963">Cytoplasm</keyword>
<keyword id="KW-0251">Elongation factor</keyword>
<keyword id="KW-0256">Endoplasmic reticulum</keyword>
<keyword id="KW-0385">Hypusine</keyword>
<keyword id="KW-0472">Membrane</keyword>
<keyword id="KW-0539">Nucleus</keyword>
<keyword id="KW-0648">Protein biosynthesis</keyword>
<keyword id="KW-1267">Proteomics identification</keyword>
<keyword id="KW-1185">Reference proteome</keyword>
<keyword id="KW-0694">RNA-binding</keyword>
<proteinExistence type="evidence at protein level"/>
<dbReference type="EMBL" id="AF262027">
    <property type="protein sequence ID" value="AAF98810.1"/>
    <property type="molecule type" value="mRNA"/>
</dbReference>
<dbReference type="EMBL" id="AF293387">
    <property type="protein sequence ID" value="AAG23176.1"/>
    <property type="molecule type" value="Genomic_DNA"/>
</dbReference>
<dbReference type="EMBL" id="AF293386">
    <property type="protein sequence ID" value="AAG23176.1"/>
    <property type="status" value="JOINED"/>
    <property type="molecule type" value="Genomic_DNA"/>
</dbReference>
<dbReference type="EMBL" id="AY205258">
    <property type="protein sequence ID" value="AAO18676.1"/>
    <property type="molecule type" value="mRNA"/>
</dbReference>
<dbReference type="EMBL" id="AY205259">
    <property type="protein sequence ID" value="AAO18677.1"/>
    <property type="molecule type" value="mRNA"/>
</dbReference>
<dbReference type="EMBL" id="AY205260">
    <property type="protein sequence ID" value="AAO18678.1"/>
    <property type="molecule type" value="mRNA"/>
</dbReference>
<dbReference type="EMBL" id="AY205261">
    <property type="protein sequence ID" value="AAO18679.1"/>
    <property type="molecule type" value="mRNA"/>
</dbReference>
<dbReference type="EMBL" id="AK311962">
    <property type="protein sequence ID" value="BAG34902.1"/>
    <property type="molecule type" value="mRNA"/>
</dbReference>
<dbReference type="EMBL" id="CH471052">
    <property type="protein sequence ID" value="EAW78501.1"/>
    <property type="molecule type" value="Genomic_DNA"/>
</dbReference>
<dbReference type="EMBL" id="BC036072">
    <property type="protein sequence ID" value="AAH36072.1"/>
    <property type="molecule type" value="mRNA"/>
</dbReference>
<dbReference type="CCDS" id="CCDS3214.1"/>
<dbReference type="RefSeq" id="NP_065123.1">
    <property type="nucleotide sequence ID" value="NM_020390.6"/>
</dbReference>
<dbReference type="SMR" id="Q9GZV4"/>
<dbReference type="BioGRID" id="121162">
    <property type="interactions" value="59"/>
</dbReference>
<dbReference type="FunCoup" id="Q9GZV4">
    <property type="interactions" value="2010"/>
</dbReference>
<dbReference type="IntAct" id="Q9GZV4">
    <property type="interactions" value="28"/>
</dbReference>
<dbReference type="MINT" id="Q9GZV4"/>
<dbReference type="STRING" id="9606.ENSP00000295822"/>
<dbReference type="TCDB" id="1.I.1.1.3">
    <property type="family name" value="the nuclear pore complex (npc) family"/>
</dbReference>
<dbReference type="GlyGen" id="Q9GZV4">
    <property type="glycosylation" value="1 site, 1 O-linked glycan (1 site)"/>
</dbReference>
<dbReference type="iPTMnet" id="Q9GZV4"/>
<dbReference type="PhosphoSitePlus" id="Q9GZV4"/>
<dbReference type="SwissPalm" id="Q9GZV4"/>
<dbReference type="BioMuta" id="EIF5A2"/>
<dbReference type="DMDM" id="74762725"/>
<dbReference type="jPOST" id="Q9GZV4"/>
<dbReference type="MassIVE" id="Q9GZV4"/>
<dbReference type="PaxDb" id="9606-ENSP00000295822"/>
<dbReference type="PeptideAtlas" id="Q9GZV4"/>
<dbReference type="PRIDE" id="Q9GZV4"/>
<dbReference type="ProteomicsDB" id="80156"/>
<dbReference type="Pumba" id="Q9GZV4"/>
<dbReference type="Antibodypedia" id="33716">
    <property type="antibodies" value="389 antibodies from 30 providers"/>
</dbReference>
<dbReference type="DNASU" id="56648"/>
<dbReference type="Ensembl" id="ENST00000295822.7">
    <property type="protein sequence ID" value="ENSP00000295822.2"/>
    <property type="gene ID" value="ENSG00000163577.8"/>
</dbReference>
<dbReference type="GeneID" id="56648"/>
<dbReference type="KEGG" id="hsa:56648"/>
<dbReference type="MANE-Select" id="ENST00000295822.7">
    <property type="protein sequence ID" value="ENSP00000295822.2"/>
    <property type="RefSeq nucleotide sequence ID" value="NM_020390.6"/>
    <property type="RefSeq protein sequence ID" value="NP_065123.1"/>
</dbReference>
<dbReference type="UCSC" id="uc003fhd.4">
    <property type="organism name" value="human"/>
</dbReference>
<dbReference type="AGR" id="HGNC:3301"/>
<dbReference type="CTD" id="56648"/>
<dbReference type="DisGeNET" id="56648"/>
<dbReference type="GeneCards" id="EIF5A2"/>
<dbReference type="HGNC" id="HGNC:3301">
    <property type="gene designation" value="EIF5A2"/>
</dbReference>
<dbReference type="HPA" id="ENSG00000163577">
    <property type="expression patterns" value="Tissue enhanced (testis)"/>
</dbReference>
<dbReference type="MIM" id="605782">
    <property type="type" value="gene"/>
</dbReference>
<dbReference type="neXtProt" id="NX_Q9GZV4"/>
<dbReference type="OpenTargets" id="ENSG00000163577"/>
<dbReference type="PharmGKB" id="PA27727"/>
<dbReference type="VEuPathDB" id="HostDB:ENSG00000163577"/>
<dbReference type="eggNOG" id="KOG3271">
    <property type="taxonomic scope" value="Eukaryota"/>
</dbReference>
<dbReference type="GeneTree" id="ENSGT00390000003738"/>
<dbReference type="HOGENOM" id="CLU_102600_0_0_1"/>
<dbReference type="InParanoid" id="Q9GZV4"/>
<dbReference type="OMA" id="QIMDMET"/>
<dbReference type="OrthoDB" id="9975114at2759"/>
<dbReference type="PAN-GO" id="Q9GZV4">
    <property type="GO annotations" value="2 GO annotations based on evolutionary models"/>
</dbReference>
<dbReference type="PhylomeDB" id="Q9GZV4"/>
<dbReference type="TreeFam" id="TF101534"/>
<dbReference type="PathwayCommons" id="Q9GZV4"/>
<dbReference type="Reactome" id="R-HSA-204626">
    <property type="pathway name" value="Hypusine synthesis from eIF5A-lysine"/>
</dbReference>
<dbReference type="SignaLink" id="Q9GZV4"/>
<dbReference type="BioGRID-ORCS" id="56648">
    <property type="hits" value="9 hits in 1154 CRISPR screens"/>
</dbReference>
<dbReference type="CD-CODE" id="91857CE7">
    <property type="entry name" value="Nucleolus"/>
</dbReference>
<dbReference type="CD-CODE" id="DEE660B4">
    <property type="entry name" value="Stress granule"/>
</dbReference>
<dbReference type="ChiTaRS" id="EIF5A2">
    <property type="organism name" value="human"/>
</dbReference>
<dbReference type="GeneWiki" id="EIF5A2"/>
<dbReference type="GenomeRNAi" id="56648"/>
<dbReference type="Pharos" id="Q9GZV4">
    <property type="development level" value="Tbio"/>
</dbReference>
<dbReference type="PRO" id="PR:Q9GZV4"/>
<dbReference type="Proteomes" id="UP000005640">
    <property type="component" value="Chromosome 3"/>
</dbReference>
<dbReference type="RNAct" id="Q9GZV4">
    <property type="molecule type" value="protein"/>
</dbReference>
<dbReference type="Bgee" id="ENSG00000163577">
    <property type="expression patterns" value="Expressed in endothelial cell and 143 other cell types or tissues"/>
</dbReference>
<dbReference type="ExpressionAtlas" id="Q9GZV4">
    <property type="expression patterns" value="baseline and differential"/>
</dbReference>
<dbReference type="GO" id="GO:0005829">
    <property type="term" value="C:cytosol"/>
    <property type="evidence" value="ECO:0000304"/>
    <property type="project" value="Reactome"/>
</dbReference>
<dbReference type="GO" id="GO:0005789">
    <property type="term" value="C:endoplasmic reticulum membrane"/>
    <property type="evidence" value="ECO:0007669"/>
    <property type="project" value="UniProtKB-SubCell"/>
</dbReference>
<dbReference type="GO" id="GO:0043231">
    <property type="term" value="C:intracellular membrane-bounded organelle"/>
    <property type="evidence" value="ECO:0000314"/>
    <property type="project" value="HPA"/>
</dbReference>
<dbReference type="GO" id="GO:0005634">
    <property type="term" value="C:nucleus"/>
    <property type="evidence" value="ECO:0007669"/>
    <property type="project" value="UniProtKB-SubCell"/>
</dbReference>
<dbReference type="GO" id="GO:0043022">
    <property type="term" value="F:ribosome binding"/>
    <property type="evidence" value="ECO:0007669"/>
    <property type="project" value="InterPro"/>
</dbReference>
<dbReference type="GO" id="GO:0003723">
    <property type="term" value="F:RNA binding"/>
    <property type="evidence" value="ECO:0007669"/>
    <property type="project" value="UniProtKB-KW"/>
</dbReference>
<dbReference type="GO" id="GO:0003746">
    <property type="term" value="F:translation elongation factor activity"/>
    <property type="evidence" value="ECO:0000318"/>
    <property type="project" value="GO_Central"/>
</dbReference>
<dbReference type="GO" id="GO:0045901">
    <property type="term" value="P:positive regulation of translational elongation"/>
    <property type="evidence" value="ECO:0007669"/>
    <property type="project" value="InterPro"/>
</dbReference>
<dbReference type="GO" id="GO:0045905">
    <property type="term" value="P:positive regulation of translational termination"/>
    <property type="evidence" value="ECO:0007669"/>
    <property type="project" value="InterPro"/>
</dbReference>
<dbReference type="GO" id="GO:0007283">
    <property type="term" value="P:spermatogenesis"/>
    <property type="evidence" value="ECO:0000303"/>
    <property type="project" value="UniProtKB"/>
</dbReference>
<dbReference type="GO" id="GO:0006414">
    <property type="term" value="P:translational elongation"/>
    <property type="evidence" value="ECO:0000318"/>
    <property type="project" value="GO_Central"/>
</dbReference>
<dbReference type="CDD" id="cd04468">
    <property type="entry name" value="S1_eIF5A"/>
    <property type="match status" value="1"/>
</dbReference>
<dbReference type="FunFam" id="2.30.30.30:FF:000007">
    <property type="entry name" value="Eukaryotic translation initiation factor 5A"/>
    <property type="match status" value="1"/>
</dbReference>
<dbReference type="FunFam" id="2.40.50.140:FF:000034">
    <property type="entry name" value="Eukaryotic translation initiation factor 5A"/>
    <property type="match status" value="1"/>
</dbReference>
<dbReference type="Gene3D" id="2.30.30.30">
    <property type="match status" value="1"/>
</dbReference>
<dbReference type="Gene3D" id="2.40.50.140">
    <property type="entry name" value="Nucleic acid-binding proteins"/>
    <property type="match status" value="1"/>
</dbReference>
<dbReference type="InterPro" id="IPR001884">
    <property type="entry name" value="IF5A-like"/>
</dbReference>
<dbReference type="InterPro" id="IPR048670">
    <property type="entry name" value="IF5A-like_N"/>
</dbReference>
<dbReference type="InterPro" id="IPR012340">
    <property type="entry name" value="NA-bd_OB-fold"/>
</dbReference>
<dbReference type="InterPro" id="IPR014722">
    <property type="entry name" value="Rib_uL2_dom2"/>
</dbReference>
<dbReference type="InterPro" id="IPR019769">
    <property type="entry name" value="Trans_elong_IF5A_hypusine_site"/>
</dbReference>
<dbReference type="InterPro" id="IPR020189">
    <property type="entry name" value="Transl_elong_IF5A_C"/>
</dbReference>
<dbReference type="InterPro" id="IPR008991">
    <property type="entry name" value="Translation_prot_SH3-like_sf"/>
</dbReference>
<dbReference type="NCBIfam" id="TIGR00037">
    <property type="entry name" value="eIF_5A"/>
    <property type="match status" value="1"/>
</dbReference>
<dbReference type="PANTHER" id="PTHR11673">
    <property type="entry name" value="TRANSLATION INITIATION FACTOR 5A FAMILY MEMBER"/>
    <property type="match status" value="1"/>
</dbReference>
<dbReference type="Pfam" id="PF01287">
    <property type="entry name" value="eIF-5a"/>
    <property type="match status" value="1"/>
</dbReference>
<dbReference type="Pfam" id="PF21485">
    <property type="entry name" value="IF5A-like_N"/>
    <property type="match status" value="1"/>
</dbReference>
<dbReference type="PIRSF" id="PIRSF003025">
    <property type="entry name" value="eIF5A"/>
    <property type="match status" value="1"/>
</dbReference>
<dbReference type="SMART" id="SM01376">
    <property type="entry name" value="eIF-5a"/>
    <property type="match status" value="1"/>
</dbReference>
<dbReference type="SUPFAM" id="SSF50249">
    <property type="entry name" value="Nucleic acid-binding proteins"/>
    <property type="match status" value="1"/>
</dbReference>
<dbReference type="SUPFAM" id="SSF50104">
    <property type="entry name" value="Translation proteins SH3-like domain"/>
    <property type="match status" value="1"/>
</dbReference>
<dbReference type="PROSITE" id="PS00302">
    <property type="entry name" value="IF5A_HYPUSINE"/>
    <property type="match status" value="1"/>
</dbReference>
<gene>
    <name type="primary">EIF5A2</name>
</gene>
<evidence type="ECO:0000250" key="1">
    <source>
        <dbReference type="UniProtKB" id="P23301"/>
    </source>
</evidence>
<evidence type="ECO:0000250" key="2">
    <source>
        <dbReference type="UniProtKB" id="P63241"/>
    </source>
</evidence>
<evidence type="ECO:0000250" key="3">
    <source>
        <dbReference type="UniProtKB" id="Q6NX89"/>
    </source>
</evidence>
<evidence type="ECO:0000269" key="4">
    <source>
    </source>
</evidence>
<evidence type="ECO:0000269" key="5">
    <source>
    </source>
</evidence>
<evidence type="ECO:0000269" key="6">
    <source>
    </source>
</evidence>
<evidence type="ECO:0000269" key="7">
    <source>
    </source>
</evidence>
<evidence type="ECO:0000305" key="8"/>
<evidence type="ECO:0007744" key="9">
    <source>
    </source>
</evidence>
<reference key="1">
    <citation type="journal article" date="2001" name="Cancer Res.">
        <title>Isolation of a novel candidate oncogene within a frequently amplified region at 3q26 in ovarian cancer.</title>
        <authorList>
            <person name="Guan X.-Y.Y."/>
            <person name="Sham J.S.T."/>
            <person name="Tang T.C.-M."/>
            <person name="Fang Y."/>
            <person name="Huo K.-K."/>
            <person name="Yang J.-M."/>
        </authorList>
    </citation>
    <scope>NUCLEOTIDE SEQUENCE [MRNA]</scope>
    <source>
        <tissue>Ovarian carcinoma</tissue>
    </source>
</reference>
<reference key="2">
    <citation type="journal article" date="2001" name="Genomics">
        <title>Human eIF5A2 on chromosome 3q25-q27 is a phylogenetically conserved vertebrate variant of eukaryotic translation initiation factor 5A with tissue-specific expression.</title>
        <authorList>
            <person name="Jenkins Z.A."/>
            <person name="Haag P.G."/>
            <person name="Johansson H.E."/>
        </authorList>
    </citation>
    <scope>NUCLEOTIDE SEQUENCE [GENOMIC DNA / MRNA]</scope>
    <scope>TISSUE SPECIFICITY</scope>
</reference>
<reference key="3">
    <citation type="submission" date="2002-12" db="EMBL/GenBank/DDBJ databases">
        <title>Expression of eIF5A genes in human cancer cells.</title>
        <authorList>
            <person name="Clement P.M.J."/>
            <person name="Jenkins Z.A."/>
            <person name="Park M.H."/>
            <person name="Johansson H.E."/>
        </authorList>
    </citation>
    <scope>NUCLEOTIDE SEQUENCE [MRNA]</scope>
</reference>
<reference key="4">
    <citation type="journal article" date="2004" name="Nat. Genet.">
        <title>Complete sequencing and characterization of 21,243 full-length human cDNAs.</title>
        <authorList>
            <person name="Ota T."/>
            <person name="Suzuki Y."/>
            <person name="Nishikawa T."/>
            <person name="Otsuki T."/>
            <person name="Sugiyama T."/>
            <person name="Irie R."/>
            <person name="Wakamatsu A."/>
            <person name="Hayashi K."/>
            <person name="Sato H."/>
            <person name="Nagai K."/>
            <person name="Kimura K."/>
            <person name="Makita H."/>
            <person name="Sekine M."/>
            <person name="Obayashi M."/>
            <person name="Nishi T."/>
            <person name="Shibahara T."/>
            <person name="Tanaka T."/>
            <person name="Ishii S."/>
            <person name="Yamamoto J."/>
            <person name="Saito K."/>
            <person name="Kawai Y."/>
            <person name="Isono Y."/>
            <person name="Nakamura Y."/>
            <person name="Nagahari K."/>
            <person name="Murakami K."/>
            <person name="Yasuda T."/>
            <person name="Iwayanagi T."/>
            <person name="Wagatsuma M."/>
            <person name="Shiratori A."/>
            <person name="Sudo H."/>
            <person name="Hosoiri T."/>
            <person name="Kaku Y."/>
            <person name="Kodaira H."/>
            <person name="Kondo H."/>
            <person name="Sugawara M."/>
            <person name="Takahashi M."/>
            <person name="Kanda K."/>
            <person name="Yokoi T."/>
            <person name="Furuya T."/>
            <person name="Kikkawa E."/>
            <person name="Omura Y."/>
            <person name="Abe K."/>
            <person name="Kamihara K."/>
            <person name="Katsuta N."/>
            <person name="Sato K."/>
            <person name="Tanikawa M."/>
            <person name="Yamazaki M."/>
            <person name="Ninomiya K."/>
            <person name="Ishibashi T."/>
            <person name="Yamashita H."/>
            <person name="Murakawa K."/>
            <person name="Fujimori K."/>
            <person name="Tanai H."/>
            <person name="Kimata M."/>
            <person name="Watanabe M."/>
            <person name="Hiraoka S."/>
            <person name="Chiba Y."/>
            <person name="Ishida S."/>
            <person name="Ono Y."/>
            <person name="Takiguchi S."/>
            <person name="Watanabe S."/>
            <person name="Yosida M."/>
            <person name="Hotuta T."/>
            <person name="Kusano J."/>
            <person name="Kanehori K."/>
            <person name="Takahashi-Fujii A."/>
            <person name="Hara H."/>
            <person name="Tanase T.-O."/>
            <person name="Nomura Y."/>
            <person name="Togiya S."/>
            <person name="Komai F."/>
            <person name="Hara R."/>
            <person name="Takeuchi K."/>
            <person name="Arita M."/>
            <person name="Imose N."/>
            <person name="Musashino K."/>
            <person name="Yuuki H."/>
            <person name="Oshima A."/>
            <person name="Sasaki N."/>
            <person name="Aotsuka S."/>
            <person name="Yoshikawa Y."/>
            <person name="Matsunawa H."/>
            <person name="Ichihara T."/>
            <person name="Shiohata N."/>
            <person name="Sano S."/>
            <person name="Moriya S."/>
            <person name="Momiyama H."/>
            <person name="Satoh N."/>
            <person name="Takami S."/>
            <person name="Terashima Y."/>
            <person name="Suzuki O."/>
            <person name="Nakagawa S."/>
            <person name="Senoh A."/>
            <person name="Mizoguchi H."/>
            <person name="Goto Y."/>
            <person name="Shimizu F."/>
            <person name="Wakebe H."/>
            <person name="Hishigaki H."/>
            <person name="Watanabe T."/>
            <person name="Sugiyama A."/>
            <person name="Takemoto M."/>
            <person name="Kawakami B."/>
            <person name="Yamazaki M."/>
            <person name="Watanabe K."/>
            <person name="Kumagai A."/>
            <person name="Itakura S."/>
            <person name="Fukuzumi Y."/>
            <person name="Fujimori Y."/>
            <person name="Komiyama M."/>
            <person name="Tashiro H."/>
            <person name="Tanigami A."/>
            <person name="Fujiwara T."/>
            <person name="Ono T."/>
            <person name="Yamada K."/>
            <person name="Fujii Y."/>
            <person name="Ozaki K."/>
            <person name="Hirao M."/>
            <person name="Ohmori Y."/>
            <person name="Kawabata A."/>
            <person name="Hikiji T."/>
            <person name="Kobatake N."/>
            <person name="Inagaki H."/>
            <person name="Ikema Y."/>
            <person name="Okamoto S."/>
            <person name="Okitani R."/>
            <person name="Kawakami T."/>
            <person name="Noguchi S."/>
            <person name="Itoh T."/>
            <person name="Shigeta K."/>
            <person name="Senba T."/>
            <person name="Matsumura K."/>
            <person name="Nakajima Y."/>
            <person name="Mizuno T."/>
            <person name="Morinaga M."/>
            <person name="Sasaki M."/>
            <person name="Togashi T."/>
            <person name="Oyama M."/>
            <person name="Hata H."/>
            <person name="Watanabe M."/>
            <person name="Komatsu T."/>
            <person name="Mizushima-Sugano J."/>
            <person name="Satoh T."/>
            <person name="Shirai Y."/>
            <person name="Takahashi Y."/>
            <person name="Nakagawa K."/>
            <person name="Okumura K."/>
            <person name="Nagase T."/>
            <person name="Nomura N."/>
            <person name="Kikuchi H."/>
            <person name="Masuho Y."/>
            <person name="Yamashita R."/>
            <person name="Nakai K."/>
            <person name="Yada T."/>
            <person name="Nakamura Y."/>
            <person name="Ohara O."/>
            <person name="Isogai T."/>
            <person name="Sugano S."/>
        </authorList>
    </citation>
    <scope>NUCLEOTIDE SEQUENCE [LARGE SCALE MRNA]</scope>
    <source>
        <tissue>Brain</tissue>
    </source>
</reference>
<reference key="5">
    <citation type="submission" date="2005-09" db="EMBL/GenBank/DDBJ databases">
        <authorList>
            <person name="Mural R.J."/>
            <person name="Istrail S."/>
            <person name="Sutton G.G."/>
            <person name="Florea L."/>
            <person name="Halpern A.L."/>
            <person name="Mobarry C.M."/>
            <person name="Lippert R."/>
            <person name="Walenz B."/>
            <person name="Shatkay H."/>
            <person name="Dew I."/>
            <person name="Miller J.R."/>
            <person name="Flanigan M.J."/>
            <person name="Edwards N.J."/>
            <person name="Bolanos R."/>
            <person name="Fasulo D."/>
            <person name="Halldorsson B.V."/>
            <person name="Hannenhalli S."/>
            <person name="Turner R."/>
            <person name="Yooseph S."/>
            <person name="Lu F."/>
            <person name="Nusskern D.R."/>
            <person name="Shue B.C."/>
            <person name="Zheng X.H."/>
            <person name="Zhong F."/>
            <person name="Delcher A.L."/>
            <person name="Huson D.H."/>
            <person name="Kravitz S.A."/>
            <person name="Mouchard L."/>
            <person name="Reinert K."/>
            <person name="Remington K.A."/>
            <person name="Clark A.G."/>
            <person name="Waterman M.S."/>
            <person name="Eichler E.E."/>
            <person name="Adams M.D."/>
            <person name="Hunkapiller M.W."/>
            <person name="Myers E.W."/>
            <person name="Venter J.C."/>
        </authorList>
    </citation>
    <scope>NUCLEOTIDE SEQUENCE [LARGE SCALE GENOMIC DNA]</scope>
</reference>
<reference key="6">
    <citation type="journal article" date="2004" name="Genome Res.">
        <title>The status, quality, and expansion of the NIH full-length cDNA project: the Mammalian Gene Collection (MGC).</title>
        <authorList>
            <consortium name="The MGC Project Team"/>
        </authorList>
    </citation>
    <scope>NUCLEOTIDE SEQUENCE [LARGE SCALE MRNA]</scope>
    <source>
        <tissue>Brain</tissue>
    </source>
</reference>
<reference key="7">
    <citation type="journal article" date="2003" name="Eur. J. Biochem.">
        <title>Identification and characterization of eukaryotic initiation factor 5A-2.</title>
        <authorList>
            <person name="Clement P.M.J."/>
            <person name="Henderson C.A."/>
            <person name="Jenkins Z.A."/>
            <person name="Smit-McBride Z."/>
            <person name="Wolff E.C."/>
            <person name="Hershey J.W."/>
            <person name="Park M.H."/>
            <person name="Johansson H.E."/>
        </authorList>
    </citation>
    <scope>FUNCTION</scope>
    <scope>HYPUSINE AT LYS-50</scope>
</reference>
<reference key="8">
    <citation type="journal article" date="2006" name="FEBS J.">
        <title>Differential expression of eIF5A-1 and eIF5A-2 in human cancer cells.</title>
        <authorList>
            <person name="Clement P.M.J."/>
            <person name="Johansson H.E."/>
            <person name="Wolff E.C."/>
            <person name="Park M.H."/>
        </authorList>
    </citation>
    <scope>TISSUE SPECIFICITY</scope>
</reference>
<reference key="9">
    <citation type="journal article" date="2012" name="Proc. Natl. Acad. Sci. U.S.A.">
        <title>N-terminal acetylome analyses and functional insights of the N-terminal acetyltransferase NatB.</title>
        <authorList>
            <person name="Van Damme P."/>
            <person name="Lasa M."/>
            <person name="Polevoda B."/>
            <person name="Gazquez C."/>
            <person name="Elosegui-Artola A."/>
            <person name="Kim D.S."/>
            <person name="De Juan-Pardo E."/>
            <person name="Demeyer K."/>
            <person name="Hole K."/>
            <person name="Larrea E."/>
            <person name="Timmerman E."/>
            <person name="Prieto J."/>
            <person name="Arnesen T."/>
            <person name="Sherman F."/>
            <person name="Gevaert K."/>
            <person name="Aldabe R."/>
        </authorList>
    </citation>
    <scope>ACETYLATION [LARGE SCALE ANALYSIS] AT ALA-2</scope>
    <scope>CLEAVAGE OF INITIATOR METHIONINE [LARGE SCALE ANALYSIS]</scope>
    <scope>IDENTIFICATION BY MASS SPECTROMETRY [LARGE SCALE ANALYSIS]</scope>
</reference>
<reference key="10">
    <citation type="journal article" date="2005" name="Fertil. Steril.">
        <title>Screening the SPO11 and EIF5A2 genes in a population of infertile men.</title>
        <authorList>
            <person name="Christensen G.L."/>
            <person name="Ivanov I.P."/>
            <person name="Atkins J.F."/>
            <person name="Mielnik A."/>
            <person name="Schlegel P.N."/>
            <person name="Carrell D.T."/>
        </authorList>
    </citation>
    <scope>VARIANT ASP-42</scope>
</reference>
<organism>
    <name type="scientific">Homo sapiens</name>
    <name type="common">Human</name>
    <dbReference type="NCBI Taxonomy" id="9606"/>
    <lineage>
        <taxon>Eukaryota</taxon>
        <taxon>Metazoa</taxon>
        <taxon>Chordata</taxon>
        <taxon>Craniata</taxon>
        <taxon>Vertebrata</taxon>
        <taxon>Euteleostomi</taxon>
        <taxon>Mammalia</taxon>
        <taxon>Eutheria</taxon>
        <taxon>Euarchontoglires</taxon>
        <taxon>Primates</taxon>
        <taxon>Haplorrhini</taxon>
        <taxon>Catarrhini</taxon>
        <taxon>Hominidae</taxon>
        <taxon>Homo</taxon>
    </lineage>
</organism>